<protein>
    <recommendedName>
        <fullName evidence="1">Probable GTP-binding protein EngB</fullName>
    </recommendedName>
</protein>
<accession>Q5NH35</accession>
<reference key="1">
    <citation type="journal article" date="2005" name="Nat. Genet.">
        <title>The complete genome sequence of Francisella tularensis, the causative agent of tularemia.</title>
        <authorList>
            <person name="Larsson P."/>
            <person name="Oyston P.C.F."/>
            <person name="Chain P."/>
            <person name="Chu M.C."/>
            <person name="Duffield M."/>
            <person name="Fuxelius H.-H."/>
            <person name="Garcia E."/>
            <person name="Haelltorp G."/>
            <person name="Johansson D."/>
            <person name="Isherwood K.E."/>
            <person name="Karp P.D."/>
            <person name="Larsson E."/>
            <person name="Liu Y."/>
            <person name="Michell S."/>
            <person name="Prior J."/>
            <person name="Prior R."/>
            <person name="Malfatti S."/>
            <person name="Sjoestedt A."/>
            <person name="Svensson K."/>
            <person name="Thompson N."/>
            <person name="Vergez L."/>
            <person name="Wagg J.K."/>
            <person name="Wren B.W."/>
            <person name="Lindler L.E."/>
            <person name="Andersson S.G.E."/>
            <person name="Forsman M."/>
            <person name="Titball R.W."/>
        </authorList>
    </citation>
    <scope>NUCLEOTIDE SEQUENCE [LARGE SCALE GENOMIC DNA]</scope>
    <source>
        <strain>SCHU S4 / Schu 4</strain>
    </source>
</reference>
<comment type="function">
    <text evidence="1">Necessary for normal cell division and for the maintenance of normal septation.</text>
</comment>
<comment type="cofactor">
    <cofactor evidence="1">
        <name>Mg(2+)</name>
        <dbReference type="ChEBI" id="CHEBI:18420"/>
    </cofactor>
</comment>
<comment type="similarity">
    <text evidence="1">Belongs to the TRAFAC class TrmE-Era-EngA-EngB-Septin-like GTPase superfamily. EngB GTPase family.</text>
</comment>
<proteinExistence type="inferred from homology"/>
<gene>
    <name evidence="1" type="primary">engB</name>
    <name type="ordered locus">FTT_0636</name>
</gene>
<name>ENGB_FRATT</name>
<dbReference type="EMBL" id="AJ749949">
    <property type="protein sequence ID" value="CAG45269.1"/>
    <property type="molecule type" value="Genomic_DNA"/>
</dbReference>
<dbReference type="RefSeq" id="WP_003020383.1">
    <property type="nucleotide sequence ID" value="NC_006570.2"/>
</dbReference>
<dbReference type="RefSeq" id="YP_169657.1">
    <property type="nucleotide sequence ID" value="NC_006570.2"/>
</dbReference>
<dbReference type="SMR" id="Q5NH35"/>
<dbReference type="STRING" id="177416.FTT_0636"/>
<dbReference type="DNASU" id="3191566"/>
<dbReference type="EnsemblBacteria" id="CAG45269">
    <property type="protein sequence ID" value="CAG45269"/>
    <property type="gene ID" value="FTT_0636"/>
</dbReference>
<dbReference type="KEGG" id="ftu:FTT_0636"/>
<dbReference type="eggNOG" id="COG0218">
    <property type="taxonomic scope" value="Bacteria"/>
</dbReference>
<dbReference type="OrthoDB" id="9804921at2"/>
<dbReference type="Proteomes" id="UP000001174">
    <property type="component" value="Chromosome"/>
</dbReference>
<dbReference type="GO" id="GO:0005829">
    <property type="term" value="C:cytosol"/>
    <property type="evidence" value="ECO:0007669"/>
    <property type="project" value="TreeGrafter"/>
</dbReference>
<dbReference type="GO" id="GO:0005525">
    <property type="term" value="F:GTP binding"/>
    <property type="evidence" value="ECO:0007669"/>
    <property type="project" value="UniProtKB-UniRule"/>
</dbReference>
<dbReference type="GO" id="GO:0046872">
    <property type="term" value="F:metal ion binding"/>
    <property type="evidence" value="ECO:0007669"/>
    <property type="project" value="UniProtKB-KW"/>
</dbReference>
<dbReference type="GO" id="GO:0000917">
    <property type="term" value="P:division septum assembly"/>
    <property type="evidence" value="ECO:0007669"/>
    <property type="project" value="UniProtKB-KW"/>
</dbReference>
<dbReference type="CDD" id="cd01876">
    <property type="entry name" value="YihA_EngB"/>
    <property type="match status" value="1"/>
</dbReference>
<dbReference type="FunFam" id="3.40.50.300:FF:000098">
    <property type="entry name" value="Probable GTP-binding protein EngB"/>
    <property type="match status" value="1"/>
</dbReference>
<dbReference type="Gene3D" id="3.40.50.300">
    <property type="entry name" value="P-loop containing nucleotide triphosphate hydrolases"/>
    <property type="match status" value="1"/>
</dbReference>
<dbReference type="HAMAP" id="MF_00321">
    <property type="entry name" value="GTPase_EngB"/>
    <property type="match status" value="1"/>
</dbReference>
<dbReference type="InterPro" id="IPR030393">
    <property type="entry name" value="G_ENGB_dom"/>
</dbReference>
<dbReference type="InterPro" id="IPR006073">
    <property type="entry name" value="GTP-bd"/>
</dbReference>
<dbReference type="InterPro" id="IPR019987">
    <property type="entry name" value="GTP-bd_ribosome_bio_YsxC"/>
</dbReference>
<dbReference type="InterPro" id="IPR027417">
    <property type="entry name" value="P-loop_NTPase"/>
</dbReference>
<dbReference type="NCBIfam" id="TIGR03598">
    <property type="entry name" value="GTPase_YsxC"/>
    <property type="match status" value="1"/>
</dbReference>
<dbReference type="PANTHER" id="PTHR11649:SF13">
    <property type="entry name" value="ENGB-TYPE G DOMAIN-CONTAINING PROTEIN"/>
    <property type="match status" value="1"/>
</dbReference>
<dbReference type="PANTHER" id="PTHR11649">
    <property type="entry name" value="MSS1/TRME-RELATED GTP-BINDING PROTEIN"/>
    <property type="match status" value="1"/>
</dbReference>
<dbReference type="Pfam" id="PF01926">
    <property type="entry name" value="MMR_HSR1"/>
    <property type="match status" value="1"/>
</dbReference>
<dbReference type="SUPFAM" id="SSF52540">
    <property type="entry name" value="P-loop containing nucleoside triphosphate hydrolases"/>
    <property type="match status" value="1"/>
</dbReference>
<dbReference type="PROSITE" id="PS51706">
    <property type="entry name" value="G_ENGB"/>
    <property type="match status" value="1"/>
</dbReference>
<sequence length="197" mass="22330">MNYSKAKYIMGAAKVSQLPEDTGVEVAFAGRSNAGKSSALNTLTDQKGLARVSKTPGRTQLINLFDLGNNNRLVDLPGYGYAKVSESIKRQWQSEMENYLTSRKCLNGIVLLVDLRHELKEFDSLMIEMAISFDLNLHILLTKADKLNNKERAQANRMIESFLKTFVSTDKISYQLFSSLTKMGLDKFKEKLDTWYQ</sequence>
<evidence type="ECO:0000255" key="1">
    <source>
        <dbReference type="HAMAP-Rule" id="MF_00321"/>
    </source>
</evidence>
<keyword id="KW-0131">Cell cycle</keyword>
<keyword id="KW-0132">Cell division</keyword>
<keyword id="KW-0342">GTP-binding</keyword>
<keyword id="KW-0460">Magnesium</keyword>
<keyword id="KW-0479">Metal-binding</keyword>
<keyword id="KW-0547">Nucleotide-binding</keyword>
<keyword id="KW-1185">Reference proteome</keyword>
<keyword id="KW-0717">Septation</keyword>
<feature type="chain" id="PRO_0000266864" description="Probable GTP-binding protein EngB">
    <location>
        <begin position="1"/>
        <end position="197"/>
    </location>
</feature>
<feature type="domain" description="EngB-type G" evidence="1">
    <location>
        <begin position="22"/>
        <end position="197"/>
    </location>
</feature>
<feature type="binding site" evidence="1">
    <location>
        <begin position="30"/>
        <end position="37"/>
    </location>
    <ligand>
        <name>GTP</name>
        <dbReference type="ChEBI" id="CHEBI:37565"/>
    </ligand>
</feature>
<feature type="binding site" evidence="1">
    <location>
        <position position="37"/>
    </location>
    <ligand>
        <name>Mg(2+)</name>
        <dbReference type="ChEBI" id="CHEBI:18420"/>
    </ligand>
</feature>
<feature type="binding site" evidence="1">
    <location>
        <begin position="57"/>
        <end position="61"/>
    </location>
    <ligand>
        <name>GTP</name>
        <dbReference type="ChEBI" id="CHEBI:37565"/>
    </ligand>
</feature>
<feature type="binding site" evidence="1">
    <location>
        <position position="59"/>
    </location>
    <ligand>
        <name>Mg(2+)</name>
        <dbReference type="ChEBI" id="CHEBI:18420"/>
    </ligand>
</feature>
<feature type="binding site" evidence="1">
    <location>
        <begin position="75"/>
        <end position="78"/>
    </location>
    <ligand>
        <name>GTP</name>
        <dbReference type="ChEBI" id="CHEBI:37565"/>
    </ligand>
</feature>
<feature type="binding site" evidence="1">
    <location>
        <begin position="142"/>
        <end position="145"/>
    </location>
    <ligand>
        <name>GTP</name>
        <dbReference type="ChEBI" id="CHEBI:37565"/>
    </ligand>
</feature>
<feature type="binding site" evidence="1">
    <location>
        <begin position="177"/>
        <end position="179"/>
    </location>
    <ligand>
        <name>GTP</name>
        <dbReference type="ChEBI" id="CHEBI:37565"/>
    </ligand>
</feature>
<organism>
    <name type="scientific">Francisella tularensis subsp. tularensis (strain SCHU S4 / Schu 4)</name>
    <dbReference type="NCBI Taxonomy" id="177416"/>
    <lineage>
        <taxon>Bacteria</taxon>
        <taxon>Pseudomonadati</taxon>
        <taxon>Pseudomonadota</taxon>
        <taxon>Gammaproteobacteria</taxon>
        <taxon>Thiotrichales</taxon>
        <taxon>Francisellaceae</taxon>
        <taxon>Francisella</taxon>
    </lineage>
</organism>